<keyword id="KW-1185">Reference proteome</keyword>
<keyword id="KW-0687">Ribonucleoprotein</keyword>
<keyword id="KW-0689">Ribosomal protein</keyword>
<name>RL33_LIMRD</name>
<reference key="1">
    <citation type="journal article" date="2011" name="PLoS Genet.">
        <title>The evolution of host specialization in the vertebrate gut symbiont Lactobacillus reuteri.</title>
        <authorList>
            <person name="Frese S.A."/>
            <person name="Benson A.K."/>
            <person name="Tannock G.W."/>
            <person name="Loach D.M."/>
            <person name="Kim J."/>
            <person name="Zhang M."/>
            <person name="Oh P.L."/>
            <person name="Heng N.C."/>
            <person name="Patil P.B."/>
            <person name="Juge N."/>
            <person name="Mackenzie D.A."/>
            <person name="Pearson B.M."/>
            <person name="Lapidus A."/>
            <person name="Dalin E."/>
            <person name="Tice H."/>
            <person name="Goltsman E."/>
            <person name="Land M."/>
            <person name="Hauser L."/>
            <person name="Ivanova N."/>
            <person name="Kyrpides N.C."/>
            <person name="Walter J."/>
        </authorList>
    </citation>
    <scope>NUCLEOTIDE SEQUENCE [LARGE SCALE GENOMIC DNA]</scope>
    <source>
        <strain>DSM 20016</strain>
    </source>
</reference>
<evidence type="ECO:0000255" key="1">
    <source>
        <dbReference type="HAMAP-Rule" id="MF_00294"/>
    </source>
</evidence>
<evidence type="ECO:0000305" key="2"/>
<organism>
    <name type="scientific">Limosilactobacillus reuteri (strain DSM 20016)</name>
    <name type="common">Lactobacillus reuteri</name>
    <dbReference type="NCBI Taxonomy" id="557436"/>
    <lineage>
        <taxon>Bacteria</taxon>
        <taxon>Bacillati</taxon>
        <taxon>Bacillota</taxon>
        <taxon>Bacilli</taxon>
        <taxon>Lactobacillales</taxon>
        <taxon>Lactobacillaceae</taxon>
        <taxon>Limosilactobacillus</taxon>
    </lineage>
</organism>
<sequence length="49" mass="6000">MRVNITLECTSCHERTYLTSKNRRHNPDRLELNKYCPREQKVTLHRETK</sequence>
<dbReference type="EMBL" id="CP000705">
    <property type="protein sequence ID" value="ABQ83467.1"/>
    <property type="molecule type" value="Genomic_DNA"/>
</dbReference>
<dbReference type="RefSeq" id="WP_003664049.1">
    <property type="nucleotide sequence ID" value="NZ_AZDD01000001.1"/>
</dbReference>
<dbReference type="SMR" id="A5VKU3"/>
<dbReference type="STRING" id="557436.Lreu_1210"/>
<dbReference type="GeneID" id="78173870"/>
<dbReference type="KEGG" id="lre:Lreu_1210"/>
<dbReference type="eggNOG" id="COG0267">
    <property type="taxonomic scope" value="Bacteria"/>
</dbReference>
<dbReference type="HOGENOM" id="CLU_190949_0_2_9"/>
<dbReference type="Proteomes" id="UP000001991">
    <property type="component" value="Chromosome"/>
</dbReference>
<dbReference type="GO" id="GO:0005737">
    <property type="term" value="C:cytoplasm"/>
    <property type="evidence" value="ECO:0007669"/>
    <property type="project" value="UniProtKB-ARBA"/>
</dbReference>
<dbReference type="GO" id="GO:1990904">
    <property type="term" value="C:ribonucleoprotein complex"/>
    <property type="evidence" value="ECO:0007669"/>
    <property type="project" value="UniProtKB-KW"/>
</dbReference>
<dbReference type="GO" id="GO:0005840">
    <property type="term" value="C:ribosome"/>
    <property type="evidence" value="ECO:0007669"/>
    <property type="project" value="UniProtKB-KW"/>
</dbReference>
<dbReference type="GO" id="GO:0003735">
    <property type="term" value="F:structural constituent of ribosome"/>
    <property type="evidence" value="ECO:0007669"/>
    <property type="project" value="InterPro"/>
</dbReference>
<dbReference type="GO" id="GO:0006412">
    <property type="term" value="P:translation"/>
    <property type="evidence" value="ECO:0007669"/>
    <property type="project" value="UniProtKB-UniRule"/>
</dbReference>
<dbReference type="Gene3D" id="2.20.28.120">
    <property type="entry name" value="Ribosomal protein L33"/>
    <property type="match status" value="1"/>
</dbReference>
<dbReference type="HAMAP" id="MF_00294">
    <property type="entry name" value="Ribosomal_bL33"/>
    <property type="match status" value="1"/>
</dbReference>
<dbReference type="InterPro" id="IPR001705">
    <property type="entry name" value="Ribosomal_bL33"/>
</dbReference>
<dbReference type="InterPro" id="IPR018264">
    <property type="entry name" value="Ribosomal_bL33_CS"/>
</dbReference>
<dbReference type="InterPro" id="IPR038584">
    <property type="entry name" value="Ribosomal_bL33_sf"/>
</dbReference>
<dbReference type="InterPro" id="IPR011332">
    <property type="entry name" value="Ribosomal_zn-bd"/>
</dbReference>
<dbReference type="NCBIfam" id="NF001764">
    <property type="entry name" value="PRK00504.1"/>
    <property type="match status" value="1"/>
</dbReference>
<dbReference type="NCBIfam" id="NF001860">
    <property type="entry name" value="PRK00595.1"/>
    <property type="match status" value="1"/>
</dbReference>
<dbReference type="NCBIfam" id="TIGR01023">
    <property type="entry name" value="rpmG_bact"/>
    <property type="match status" value="1"/>
</dbReference>
<dbReference type="PANTHER" id="PTHR43168">
    <property type="entry name" value="50S RIBOSOMAL PROTEIN L33, CHLOROPLASTIC"/>
    <property type="match status" value="1"/>
</dbReference>
<dbReference type="PANTHER" id="PTHR43168:SF2">
    <property type="entry name" value="LARGE RIBOSOMAL SUBUNIT PROTEIN BL33C"/>
    <property type="match status" value="1"/>
</dbReference>
<dbReference type="Pfam" id="PF00471">
    <property type="entry name" value="Ribosomal_L33"/>
    <property type="match status" value="1"/>
</dbReference>
<dbReference type="SUPFAM" id="SSF57829">
    <property type="entry name" value="Zn-binding ribosomal proteins"/>
    <property type="match status" value="1"/>
</dbReference>
<dbReference type="PROSITE" id="PS00582">
    <property type="entry name" value="RIBOSOMAL_L33"/>
    <property type="match status" value="1"/>
</dbReference>
<comment type="similarity">
    <text evidence="1">Belongs to the bacterial ribosomal protein bL33 family.</text>
</comment>
<accession>A5VKU3</accession>
<gene>
    <name evidence="1" type="primary">rpmG</name>
    <name type="ordered locus">Lreu_1210</name>
</gene>
<proteinExistence type="inferred from homology"/>
<protein>
    <recommendedName>
        <fullName evidence="1">Large ribosomal subunit protein bL33</fullName>
    </recommendedName>
    <alternativeName>
        <fullName evidence="2">50S ribosomal protein L33</fullName>
    </alternativeName>
</protein>
<feature type="chain" id="PRO_0000356509" description="Large ribosomal subunit protein bL33">
    <location>
        <begin position="1"/>
        <end position="49"/>
    </location>
</feature>